<reference key="1">
    <citation type="journal article" date="2004" name="Proc. Natl. Acad. Sci. U.S.A.">
        <title>The diploid genome sequence of Candida albicans.</title>
        <authorList>
            <person name="Jones T."/>
            <person name="Federspiel N.A."/>
            <person name="Chibana H."/>
            <person name="Dungan J."/>
            <person name="Kalman S."/>
            <person name="Magee B.B."/>
            <person name="Newport G."/>
            <person name="Thorstenson Y.R."/>
            <person name="Agabian N."/>
            <person name="Magee P.T."/>
            <person name="Davis R.W."/>
            <person name="Scherer S."/>
        </authorList>
    </citation>
    <scope>NUCLEOTIDE SEQUENCE [LARGE SCALE GENOMIC DNA]</scope>
    <source>
        <strain>SC5314 / ATCC MYA-2876</strain>
    </source>
</reference>
<reference key="2">
    <citation type="journal article" date="2007" name="Genome Biol.">
        <title>Assembly of the Candida albicans genome into sixteen supercontigs aligned on the eight chromosomes.</title>
        <authorList>
            <person name="van het Hoog M."/>
            <person name="Rast T.J."/>
            <person name="Martchenko M."/>
            <person name="Grindle S."/>
            <person name="Dignard D."/>
            <person name="Hogues H."/>
            <person name="Cuomo C."/>
            <person name="Berriman M."/>
            <person name="Scherer S."/>
            <person name="Magee B.B."/>
            <person name="Whiteway M."/>
            <person name="Chibana H."/>
            <person name="Nantel A."/>
            <person name="Magee P.T."/>
        </authorList>
    </citation>
    <scope>GENOME REANNOTATION</scope>
    <source>
        <strain>SC5314 / ATCC MYA-2876</strain>
    </source>
</reference>
<reference key="3">
    <citation type="journal article" date="2013" name="Genome Biol.">
        <title>Assembly of a phased diploid Candida albicans genome facilitates allele-specific measurements and provides a simple model for repeat and indel structure.</title>
        <authorList>
            <person name="Muzzey D."/>
            <person name="Schwartz K."/>
            <person name="Weissman J.S."/>
            <person name="Sherlock G."/>
        </authorList>
    </citation>
    <scope>NUCLEOTIDE SEQUENCE [LARGE SCALE GENOMIC DNA]</scope>
    <scope>GENOME REANNOTATION</scope>
    <source>
        <strain>SC5314 / ATCC MYA-2876</strain>
    </source>
</reference>
<dbReference type="EMBL" id="CP017628">
    <property type="protein sequence ID" value="AOW30242.1"/>
    <property type="molecule type" value="Genomic_DNA"/>
</dbReference>
<dbReference type="RefSeq" id="XP_719157.2">
    <property type="nucleotide sequence ID" value="XM_714064.2"/>
</dbReference>
<dbReference type="SMR" id="Q5ABV4"/>
<dbReference type="STRING" id="237561.Q5ABV4"/>
<dbReference type="EnsemblFungi" id="C6_03110C_A-T">
    <property type="protein sequence ID" value="C6_03110C_A-T-p1"/>
    <property type="gene ID" value="C6_03110C_A"/>
</dbReference>
<dbReference type="GeneID" id="3639278"/>
<dbReference type="KEGG" id="cal:CAALFM_C603110CA"/>
<dbReference type="CGD" id="CAL0000191787">
    <property type="gene designation" value="orf19.13041"/>
</dbReference>
<dbReference type="VEuPathDB" id="FungiDB:C6_03110C_A"/>
<dbReference type="eggNOG" id="KOG0322">
    <property type="taxonomic scope" value="Eukaryota"/>
</dbReference>
<dbReference type="HOGENOM" id="CLU_045414_0_0_1"/>
<dbReference type="InParanoid" id="Q5ABV4"/>
<dbReference type="OrthoDB" id="7668193at2759"/>
<dbReference type="PRO" id="PR:Q5ABV4"/>
<dbReference type="Proteomes" id="UP000000559">
    <property type="component" value="Chromosome 6"/>
</dbReference>
<dbReference type="GO" id="GO:0005634">
    <property type="term" value="C:nucleus"/>
    <property type="evidence" value="ECO:0007669"/>
    <property type="project" value="UniProtKB-SubCell"/>
</dbReference>
<dbReference type="GO" id="GO:0006325">
    <property type="term" value="P:chromatin organization"/>
    <property type="evidence" value="ECO:0007669"/>
    <property type="project" value="UniProtKB-KW"/>
</dbReference>
<dbReference type="Gene3D" id="2.130.10.10">
    <property type="entry name" value="YVTN repeat-like/Quinoprotein amine dehydrogenase"/>
    <property type="match status" value="1"/>
</dbReference>
<dbReference type="InterPro" id="IPR015943">
    <property type="entry name" value="WD40/YVTN_repeat-like_dom_sf"/>
</dbReference>
<dbReference type="InterPro" id="IPR036322">
    <property type="entry name" value="WD40_repeat_dom_sf"/>
</dbReference>
<dbReference type="InterPro" id="IPR001680">
    <property type="entry name" value="WD40_rpt"/>
</dbReference>
<dbReference type="Pfam" id="PF00400">
    <property type="entry name" value="WD40"/>
    <property type="match status" value="1"/>
</dbReference>
<dbReference type="SMART" id="SM00320">
    <property type="entry name" value="WD40"/>
    <property type="match status" value="3"/>
</dbReference>
<dbReference type="SUPFAM" id="SSF50978">
    <property type="entry name" value="WD40 repeat-like"/>
    <property type="match status" value="1"/>
</dbReference>
<dbReference type="PROSITE" id="PS50082">
    <property type="entry name" value="WD_REPEATS_2"/>
    <property type="match status" value="1"/>
</dbReference>
<dbReference type="PROSITE" id="PS50294">
    <property type="entry name" value="WD_REPEATS_REGION"/>
    <property type="match status" value="1"/>
</dbReference>
<protein>
    <recommendedName>
        <fullName>ASTRA-associated protein 1</fullName>
    </recommendedName>
</protein>
<comment type="function">
    <text evidence="1">Component of the ASTRA complex involved in chromatin remodeling.</text>
</comment>
<comment type="subunit">
    <text evidence="1">Component of the ASTRA chromatin remodeling machinery complex.</text>
</comment>
<comment type="subcellular location">
    <subcellularLocation>
        <location evidence="1">Nucleus</location>
    </subcellularLocation>
</comment>
<comment type="similarity">
    <text evidence="2">Belongs to the WD repeat ASA1 family.</text>
</comment>
<feature type="chain" id="PRO_0000402204" description="ASTRA-associated protein 1">
    <location>
        <begin position="1"/>
        <end position="377"/>
    </location>
</feature>
<feature type="repeat" description="WD 1">
    <location>
        <begin position="10"/>
        <end position="50"/>
    </location>
</feature>
<feature type="repeat" description="WD 2">
    <location>
        <begin position="53"/>
        <end position="90"/>
    </location>
</feature>
<feature type="repeat" description="WD 3">
    <location>
        <begin position="230"/>
        <end position="262"/>
    </location>
</feature>
<feature type="repeat" description="WD 4">
    <location>
        <begin position="263"/>
        <end position="303"/>
    </location>
</feature>
<feature type="repeat" description="WD 5">
    <location>
        <begin position="342"/>
        <end position="377"/>
    </location>
</feature>
<accession>Q5ABV4</accession>
<accession>A0A1D8PQ30</accession>
<accession>Q5AC76</accession>
<keyword id="KW-0156">Chromatin regulator</keyword>
<keyword id="KW-0539">Nucleus</keyword>
<keyword id="KW-1185">Reference proteome</keyword>
<keyword id="KW-0677">Repeat</keyword>
<keyword id="KW-0853">WD repeat</keyword>
<evidence type="ECO:0000250" key="1"/>
<evidence type="ECO:0000305" key="2"/>
<organism>
    <name type="scientific">Candida albicans (strain SC5314 / ATCC MYA-2876)</name>
    <name type="common">Yeast</name>
    <dbReference type="NCBI Taxonomy" id="237561"/>
    <lineage>
        <taxon>Eukaryota</taxon>
        <taxon>Fungi</taxon>
        <taxon>Dikarya</taxon>
        <taxon>Ascomycota</taxon>
        <taxon>Saccharomycotina</taxon>
        <taxon>Pichiomycetes</taxon>
        <taxon>Debaryomycetaceae</taxon>
        <taxon>Candida/Lodderomyces clade</taxon>
        <taxon>Candida</taxon>
    </lineage>
</organism>
<name>ASA1_CANAL</name>
<sequence length="377" mass="42568">MLSTKFTLRSHKSSVAYIYQDPRTPFNLFTADSSGLIINWDLTIRRPKKSWQAHTDTILTISTIHNHLLTHSRDNTIKIWDESYSCVLEIPCNALNFSNICIIYDLLITPASINSNNLDVYKIDKDWQITRLISDFDVYKLVNKGEIIEEIGSSGTSRNDFGIIMQMKIIHTNTTTTTSENNSDYIIYVGFESGDIVGLQLILPRARILSTTGNTNDKTLINQSAKFILQYHNSTHVPNPVICLSNLDSVLVSGSTTNKVIIHSDPIEIMKMDHSGIQAIVNFKNDRLIFGYWNGYIQYGDISINQSLPKLGNTEQEKSKLTKKLTFMTILNESNQETLQSPTGKSKYLALLKSKRNLVFPLLLAGYEDGSILAYNI</sequence>
<gene>
    <name type="primary">ASA1</name>
    <name type="ordered locus">CAALFM_C603110CA</name>
    <name type="ORF">CaO19.13041</name>
    <name type="ORF">CaO19.5596</name>
</gene>
<proteinExistence type="inferred from homology"/>